<evidence type="ECO:0000255" key="1">
    <source>
        <dbReference type="HAMAP-Rule" id="MF_01393"/>
    </source>
</evidence>
<dbReference type="EMBL" id="AM933173">
    <property type="protein sequence ID" value="CAR39351.1"/>
    <property type="molecule type" value="Genomic_DNA"/>
</dbReference>
<dbReference type="RefSeq" id="WP_000135632.1">
    <property type="nucleotide sequence ID" value="NC_011274.1"/>
</dbReference>
<dbReference type="SMR" id="B5RFV7"/>
<dbReference type="KEGG" id="seg:SG3562"/>
<dbReference type="HOGENOM" id="CLU_041018_1_0_6"/>
<dbReference type="Proteomes" id="UP000008321">
    <property type="component" value="Chromosome"/>
</dbReference>
<dbReference type="GO" id="GO:0005886">
    <property type="term" value="C:plasma membrane"/>
    <property type="evidence" value="ECO:0007669"/>
    <property type="project" value="UniProtKB-SubCell"/>
</dbReference>
<dbReference type="GO" id="GO:0045259">
    <property type="term" value="C:proton-transporting ATP synthase complex"/>
    <property type="evidence" value="ECO:0007669"/>
    <property type="project" value="UniProtKB-KW"/>
</dbReference>
<dbReference type="GO" id="GO:0046933">
    <property type="term" value="F:proton-transporting ATP synthase activity, rotational mechanism"/>
    <property type="evidence" value="ECO:0007669"/>
    <property type="project" value="UniProtKB-UniRule"/>
</dbReference>
<dbReference type="GO" id="GO:0042777">
    <property type="term" value="P:proton motive force-driven plasma membrane ATP synthesis"/>
    <property type="evidence" value="ECO:0007669"/>
    <property type="project" value="TreeGrafter"/>
</dbReference>
<dbReference type="CDD" id="cd00310">
    <property type="entry name" value="ATP-synt_Fo_a_6"/>
    <property type="match status" value="1"/>
</dbReference>
<dbReference type="FunFam" id="1.20.120.220:FF:000002">
    <property type="entry name" value="ATP synthase subunit a"/>
    <property type="match status" value="1"/>
</dbReference>
<dbReference type="Gene3D" id="1.20.120.220">
    <property type="entry name" value="ATP synthase, F0 complex, subunit A"/>
    <property type="match status" value="1"/>
</dbReference>
<dbReference type="HAMAP" id="MF_01393">
    <property type="entry name" value="ATP_synth_a_bact"/>
    <property type="match status" value="1"/>
</dbReference>
<dbReference type="InterPro" id="IPR045082">
    <property type="entry name" value="ATP_syn_F0_a_bact/chloroplast"/>
</dbReference>
<dbReference type="InterPro" id="IPR000568">
    <property type="entry name" value="ATP_synth_F0_asu"/>
</dbReference>
<dbReference type="InterPro" id="IPR023011">
    <property type="entry name" value="ATP_synth_F0_asu_AS"/>
</dbReference>
<dbReference type="InterPro" id="IPR035908">
    <property type="entry name" value="F0_ATP_A_sf"/>
</dbReference>
<dbReference type="NCBIfam" id="TIGR01131">
    <property type="entry name" value="ATP_synt_6_or_A"/>
    <property type="match status" value="1"/>
</dbReference>
<dbReference type="NCBIfam" id="NF004477">
    <property type="entry name" value="PRK05815.1-1"/>
    <property type="match status" value="1"/>
</dbReference>
<dbReference type="PANTHER" id="PTHR42823">
    <property type="entry name" value="ATP SYNTHASE SUBUNIT A, CHLOROPLASTIC"/>
    <property type="match status" value="1"/>
</dbReference>
<dbReference type="PANTHER" id="PTHR42823:SF3">
    <property type="entry name" value="ATP SYNTHASE SUBUNIT A, CHLOROPLASTIC"/>
    <property type="match status" value="1"/>
</dbReference>
<dbReference type="Pfam" id="PF00119">
    <property type="entry name" value="ATP-synt_A"/>
    <property type="match status" value="1"/>
</dbReference>
<dbReference type="PRINTS" id="PR00123">
    <property type="entry name" value="ATPASEA"/>
</dbReference>
<dbReference type="SUPFAM" id="SSF81336">
    <property type="entry name" value="F1F0 ATP synthase subunit A"/>
    <property type="match status" value="1"/>
</dbReference>
<dbReference type="PROSITE" id="PS00449">
    <property type="entry name" value="ATPASE_A"/>
    <property type="match status" value="1"/>
</dbReference>
<proteinExistence type="inferred from homology"/>
<name>ATP6_SALG2</name>
<gene>
    <name evidence="1" type="primary">atpB</name>
    <name type="ordered locus">SG3562</name>
</gene>
<accession>B5RFV7</accession>
<reference key="1">
    <citation type="journal article" date="2008" name="Genome Res.">
        <title>Comparative genome analysis of Salmonella enteritidis PT4 and Salmonella gallinarum 287/91 provides insights into evolutionary and host adaptation pathways.</title>
        <authorList>
            <person name="Thomson N.R."/>
            <person name="Clayton D.J."/>
            <person name="Windhorst D."/>
            <person name="Vernikos G."/>
            <person name="Davidson S."/>
            <person name="Churcher C."/>
            <person name="Quail M.A."/>
            <person name="Stevens M."/>
            <person name="Jones M.A."/>
            <person name="Watson M."/>
            <person name="Barron A."/>
            <person name="Layton A."/>
            <person name="Pickard D."/>
            <person name="Kingsley R.A."/>
            <person name="Bignell A."/>
            <person name="Clark L."/>
            <person name="Harris B."/>
            <person name="Ormond D."/>
            <person name="Abdellah Z."/>
            <person name="Brooks K."/>
            <person name="Cherevach I."/>
            <person name="Chillingworth T."/>
            <person name="Woodward J."/>
            <person name="Norberczak H."/>
            <person name="Lord A."/>
            <person name="Arrowsmith C."/>
            <person name="Jagels K."/>
            <person name="Moule S."/>
            <person name="Mungall K."/>
            <person name="Saunders M."/>
            <person name="Whitehead S."/>
            <person name="Chabalgoity J.A."/>
            <person name="Maskell D."/>
            <person name="Humphreys T."/>
            <person name="Roberts M."/>
            <person name="Barrow P.A."/>
            <person name="Dougan G."/>
            <person name="Parkhill J."/>
        </authorList>
    </citation>
    <scope>NUCLEOTIDE SEQUENCE [LARGE SCALE GENOMIC DNA]</scope>
    <source>
        <strain>287/91 / NCTC 13346</strain>
    </source>
</reference>
<sequence>MASENMTPQEYIGHHLNNLQLDLRTFSLVDPQNPPATFWTLNIDSMFFSVVLGLLFLVMFRSVAKKATSGVPGKFQTAIELIVGFVHGSVKDMYHGKSKLIAPLALTIFVWVFLMNLMDLLPIDLLPYIAEHWLGLPATRVVPSADVNITLSMALGVFILILFYSIKMKGIGGFAKELTLQPFNHWAFIPVNLILEGVSLLSKPVSLGLRLFGNMYAGELIFILIAGLLPWWSQWILNVPWAIFHILIITLQAFIFMVLTIVYLSMASEEH</sequence>
<comment type="function">
    <text evidence="1">Key component of the proton channel; it plays a direct role in the translocation of protons across the membrane.</text>
</comment>
<comment type="subunit">
    <text evidence="1">F-type ATPases have 2 components, CF(1) - the catalytic core - and CF(0) - the membrane proton channel. CF(1) has five subunits: alpha(3), beta(3), gamma(1), delta(1), epsilon(1). CF(0) has three main subunits: a(1), b(2) and c(9-12). The alpha and beta chains form an alternating ring which encloses part of the gamma chain. CF(1) is attached to CF(0) by a central stalk formed by the gamma and epsilon chains, while a peripheral stalk is formed by the delta and b chains.</text>
</comment>
<comment type="subcellular location">
    <subcellularLocation>
        <location evidence="1">Cell inner membrane</location>
        <topology evidence="1">Multi-pass membrane protein</topology>
    </subcellularLocation>
</comment>
<comment type="similarity">
    <text evidence="1">Belongs to the ATPase A chain family.</text>
</comment>
<protein>
    <recommendedName>
        <fullName evidence="1">ATP synthase subunit a</fullName>
    </recommendedName>
    <alternativeName>
        <fullName evidence="1">ATP synthase F0 sector subunit a</fullName>
    </alternativeName>
    <alternativeName>
        <fullName evidence="1">F-ATPase subunit 6</fullName>
    </alternativeName>
</protein>
<keyword id="KW-0066">ATP synthesis</keyword>
<keyword id="KW-0997">Cell inner membrane</keyword>
<keyword id="KW-1003">Cell membrane</keyword>
<keyword id="KW-0138">CF(0)</keyword>
<keyword id="KW-0375">Hydrogen ion transport</keyword>
<keyword id="KW-0406">Ion transport</keyword>
<keyword id="KW-0472">Membrane</keyword>
<keyword id="KW-0812">Transmembrane</keyword>
<keyword id="KW-1133">Transmembrane helix</keyword>
<keyword id="KW-0813">Transport</keyword>
<feature type="chain" id="PRO_0000362437" description="ATP synthase subunit a">
    <location>
        <begin position="1"/>
        <end position="271"/>
    </location>
</feature>
<feature type="transmembrane region" description="Helical" evidence="1">
    <location>
        <begin position="38"/>
        <end position="58"/>
    </location>
</feature>
<feature type="transmembrane region" description="Helical" evidence="1">
    <location>
        <begin position="100"/>
        <end position="120"/>
    </location>
</feature>
<feature type="transmembrane region" description="Helical" evidence="1">
    <location>
        <begin position="146"/>
        <end position="166"/>
    </location>
</feature>
<feature type="transmembrane region" description="Helical" evidence="1">
    <location>
        <begin position="220"/>
        <end position="240"/>
    </location>
</feature>
<feature type="transmembrane region" description="Helical" evidence="1">
    <location>
        <begin position="242"/>
        <end position="262"/>
    </location>
</feature>
<organism>
    <name type="scientific">Salmonella gallinarum (strain 287/91 / NCTC 13346)</name>
    <dbReference type="NCBI Taxonomy" id="550538"/>
    <lineage>
        <taxon>Bacteria</taxon>
        <taxon>Pseudomonadati</taxon>
        <taxon>Pseudomonadota</taxon>
        <taxon>Gammaproteobacteria</taxon>
        <taxon>Enterobacterales</taxon>
        <taxon>Enterobacteriaceae</taxon>
        <taxon>Salmonella</taxon>
    </lineage>
</organism>